<dbReference type="EMBL" id="U63856">
    <property type="protein sequence ID" value="AAC47553.1"/>
    <property type="molecule type" value="Genomic_DNA"/>
</dbReference>
<dbReference type="EMBL" id="CH379061">
    <property type="protein sequence ID" value="EAL33036.2"/>
    <property type="status" value="ALT_SEQ"/>
    <property type="molecule type" value="Genomic_DNA"/>
</dbReference>
<dbReference type="EMBL" id="AY754464">
    <property type="protein sequence ID" value="AAX13039.1"/>
    <property type="molecule type" value="Genomic_DNA"/>
</dbReference>
<dbReference type="SMR" id="P91699"/>
<dbReference type="FunCoup" id="P91699">
    <property type="interactions" value="169"/>
</dbReference>
<dbReference type="STRING" id="46245.P91699"/>
<dbReference type="GlyCosmos" id="P91699">
    <property type="glycosylation" value="4 sites, No reported glycans"/>
</dbReference>
<dbReference type="eggNOG" id="KOG3900">
    <property type="taxonomic scope" value="Eukaryota"/>
</dbReference>
<dbReference type="InParanoid" id="P91699"/>
<dbReference type="Proteomes" id="UP000001819">
    <property type="component" value="Unplaced"/>
</dbReference>
<dbReference type="GO" id="GO:0005615">
    <property type="term" value="C:extracellular space"/>
    <property type="evidence" value="ECO:0007669"/>
    <property type="project" value="TreeGrafter"/>
</dbReference>
<dbReference type="GO" id="GO:0005125">
    <property type="term" value="F:cytokine activity"/>
    <property type="evidence" value="ECO:0007669"/>
    <property type="project" value="TreeGrafter"/>
</dbReference>
<dbReference type="GO" id="GO:0008083">
    <property type="term" value="F:growth factor activity"/>
    <property type="evidence" value="ECO:0007669"/>
    <property type="project" value="UniProtKB-KW"/>
</dbReference>
<dbReference type="GO" id="GO:0030154">
    <property type="term" value="P:cell differentiation"/>
    <property type="evidence" value="ECO:0007669"/>
    <property type="project" value="UniProtKB-KW"/>
</dbReference>
<dbReference type="CDD" id="cd13760">
    <property type="entry name" value="TGF_beta_BMP2_like"/>
    <property type="match status" value="1"/>
</dbReference>
<dbReference type="FunFam" id="2.10.90.10:FF:000103">
    <property type="entry name" value="Bone morphogenetic protein 16"/>
    <property type="match status" value="1"/>
</dbReference>
<dbReference type="FunFam" id="2.60.120.970:FF:000018">
    <property type="entry name" value="Decapentaplegic, isoform A"/>
    <property type="match status" value="1"/>
</dbReference>
<dbReference type="Gene3D" id="2.60.120.970">
    <property type="match status" value="1"/>
</dbReference>
<dbReference type="Gene3D" id="2.10.90.10">
    <property type="entry name" value="Cystine-knot cytokines"/>
    <property type="match status" value="1"/>
</dbReference>
<dbReference type="InterPro" id="IPR029034">
    <property type="entry name" value="Cystine-knot_cytokine"/>
</dbReference>
<dbReference type="InterPro" id="IPR001839">
    <property type="entry name" value="TGF-b_C"/>
</dbReference>
<dbReference type="InterPro" id="IPR001111">
    <property type="entry name" value="TGF-b_propeptide"/>
</dbReference>
<dbReference type="InterPro" id="IPR015615">
    <property type="entry name" value="TGF-beta-rel"/>
</dbReference>
<dbReference type="InterPro" id="IPR017948">
    <property type="entry name" value="TGFb_CS"/>
</dbReference>
<dbReference type="PANTHER" id="PTHR11848:SF263">
    <property type="entry name" value="PROTEIN DECAPENTAPLEGIC"/>
    <property type="match status" value="1"/>
</dbReference>
<dbReference type="PANTHER" id="PTHR11848">
    <property type="entry name" value="TGF-BETA FAMILY"/>
    <property type="match status" value="1"/>
</dbReference>
<dbReference type="Pfam" id="PF00019">
    <property type="entry name" value="TGF_beta"/>
    <property type="match status" value="1"/>
</dbReference>
<dbReference type="Pfam" id="PF00688">
    <property type="entry name" value="TGFb_propeptide"/>
    <property type="match status" value="1"/>
</dbReference>
<dbReference type="PRINTS" id="PR00669">
    <property type="entry name" value="INHIBINA"/>
</dbReference>
<dbReference type="SMART" id="SM00204">
    <property type="entry name" value="TGFB"/>
    <property type="match status" value="1"/>
</dbReference>
<dbReference type="SUPFAM" id="SSF57501">
    <property type="entry name" value="Cystine-knot cytokines"/>
    <property type="match status" value="1"/>
</dbReference>
<dbReference type="PROSITE" id="PS00250">
    <property type="entry name" value="TGF_BETA_1"/>
    <property type="match status" value="1"/>
</dbReference>
<dbReference type="PROSITE" id="PS51362">
    <property type="entry name" value="TGF_BETA_2"/>
    <property type="match status" value="1"/>
</dbReference>
<organism>
    <name type="scientific">Drosophila pseudoobscura pseudoobscura</name>
    <name type="common">Fruit fly</name>
    <dbReference type="NCBI Taxonomy" id="46245"/>
    <lineage>
        <taxon>Eukaryota</taxon>
        <taxon>Metazoa</taxon>
        <taxon>Ecdysozoa</taxon>
        <taxon>Arthropoda</taxon>
        <taxon>Hexapoda</taxon>
        <taxon>Insecta</taxon>
        <taxon>Pterygota</taxon>
        <taxon>Neoptera</taxon>
        <taxon>Endopterygota</taxon>
        <taxon>Diptera</taxon>
        <taxon>Brachycera</taxon>
        <taxon>Muscomorpha</taxon>
        <taxon>Ephydroidea</taxon>
        <taxon>Drosophilidae</taxon>
        <taxon>Drosophila</taxon>
        <taxon>Sophophora</taxon>
    </lineage>
</organism>
<gene>
    <name type="primary">dpp</name>
    <name type="ORF">GA22099</name>
</gene>
<sequence>MRAWILLLAVLATSQPIVQVASTEDTSISQRFIAAIAPTRTEPSAASAAAAAATATATATATTALAKAFNPFNELLYKSSDSDSDNNNNNYKNRNNNNNNLNKGPRNNKNKGNKHSKSDANRQFNEVHKPRTDQLENSKNKPKQLVNKTNKMAVKDQKHHQPQQQQQQHHKPATTTALTSTESHQSPIETIFVDDPALALEEEVASINVPANAGAIIEEQEPSTYSKKELIKDKLKPDPSTLVEIENSLLSLFNMKRPPKIDRSKIIIPEAMKKLYAEIMGHELDSVNIPRPGLLTKSANTVRSFTHKDSKIDDRFPHHHRFRLHFDVKSIPAEEKLKAAELQLTRDALAQAAVASTSANRTRYQVLVYDITRVGVRGQREPSYLLLDTKTVRLNSTDTVSLDVQPAVDRWLATPQKNYGLLVEVRTMRSLKPAPHHHVRLRRSADEAHEQWQHKQPLLFAYTDDGRHKARSIRDVSGGGGGGGGAGEGGKGNGGGRNRRHQRRPARRKNHEETCRRHSLYVDFADVGWDDWIVAPPGYDAYYCHGKCPFPLADHFNSTNHAVVQTLVNNLNPGKVPKACCVPTQLDSVAMLYLNDQSTVVLKNYQEMTVVGCGCR</sequence>
<reference key="1">
    <citation type="journal article" date="1997" name="Genetics">
        <title>Molecular evolution at the decapentaplegic locus in Drosophila.</title>
        <authorList>
            <person name="Newfeld S.J."/>
            <person name="Padgett R.W."/>
            <person name="Findley S.D."/>
            <person name="Richter B.G."/>
            <person name="Sanicola M."/>
            <person name="de Cuevas M."/>
            <person name="Gelbart W.M."/>
        </authorList>
    </citation>
    <scope>NUCLEOTIDE SEQUENCE [GENOMIC DNA]</scope>
</reference>
<reference key="2">
    <citation type="journal article" date="2005" name="Genome Res.">
        <title>Comparative genome sequencing of Drosophila pseudoobscura: chromosomal, gene, and cis-element evolution.</title>
        <authorList>
            <person name="Richards S."/>
            <person name="Liu Y."/>
            <person name="Bettencourt B.R."/>
            <person name="Hradecky P."/>
            <person name="Letovsky S."/>
            <person name="Nielsen R."/>
            <person name="Thornton K."/>
            <person name="Hubisz M.J."/>
            <person name="Chen R."/>
            <person name="Meisel R.P."/>
            <person name="Couronne O."/>
            <person name="Hua S."/>
            <person name="Smith M.A."/>
            <person name="Zhang P."/>
            <person name="Liu J."/>
            <person name="Bussemaker H.J."/>
            <person name="van Batenburg M.F."/>
            <person name="Howells S.L."/>
            <person name="Scherer S.E."/>
            <person name="Sodergren E."/>
            <person name="Matthews B.B."/>
            <person name="Crosby M.A."/>
            <person name="Schroeder A.J."/>
            <person name="Ortiz-Barrientos D."/>
            <person name="Rives C.M."/>
            <person name="Metzker M.L."/>
            <person name="Muzny D.M."/>
            <person name="Scott G."/>
            <person name="Steffen D."/>
            <person name="Wheeler D.A."/>
            <person name="Worley K.C."/>
            <person name="Havlak P."/>
            <person name="Durbin K.J."/>
            <person name="Egan A."/>
            <person name="Gill R."/>
            <person name="Hume J."/>
            <person name="Morgan M.B."/>
            <person name="Miner G."/>
            <person name="Hamilton C."/>
            <person name="Huang Y."/>
            <person name="Waldron L."/>
            <person name="Verduzco D."/>
            <person name="Clerc-Blankenburg K.P."/>
            <person name="Dubchak I."/>
            <person name="Noor M.A.F."/>
            <person name="Anderson W."/>
            <person name="White K.P."/>
            <person name="Clark A.G."/>
            <person name="Schaeffer S.W."/>
            <person name="Gelbart W.M."/>
            <person name="Weinstock G.M."/>
            <person name="Gibbs R.A."/>
        </authorList>
    </citation>
    <scope>NUCLEOTIDE SEQUENCE [LARGE SCALE GENOMIC DNA]</scope>
    <source>
        <strain>MV2-25 / Tucson 14011-0121.94</strain>
    </source>
</reference>
<reference key="3">
    <citation type="journal article" date="2005" name="Genetics">
        <title>Patterns of selection on synonymous and nonsynonymous variants in Drosophila miranda.</title>
        <authorList>
            <person name="Bartolome C."/>
            <person name="Maside X."/>
            <person name="Yi S."/>
            <person name="Grant A.L."/>
            <person name="Charlesworth B."/>
        </authorList>
    </citation>
    <scope>NUCLEOTIDE SEQUENCE [GENOMIC DNA] OF 10-333</scope>
</reference>
<comment type="function">
    <text evidence="1">Acts as an extracellular morphogen to establish at least two cellular response thresholds within the dorsal half of the drosophila embryo. Required for the proper development of the embryonic dorsal hypoderm, for viability of larvae and for cell viability of the epithelial cells in the imaginal disks. Acts together with scw (By similarity).</text>
</comment>
<comment type="subunit">
    <text evidence="1">Heterodimers of scw/dpp are the active subunit, dpp/dpp homodimers elicit a basal response and scw/scw homodimers alone are ineffective in specifying a dorsal pattern.</text>
</comment>
<comment type="subcellular location">
    <subcellularLocation>
        <location>Secreted</location>
    </subcellularLocation>
    <text evidence="1">Is internalized by receptor-mediated endocytosis.</text>
</comment>
<comment type="tissue specificity">
    <text>Expressed in the imaginal discs associated with establishment of the proximal-distal axis of the appendages, and midgut mesoderm.</text>
</comment>
<comment type="similarity">
    <text evidence="4">Belongs to the TGF-beta family.</text>
</comment>
<comment type="sequence caution" evidence="4">
    <conflict type="erroneous gene model prediction">
        <sequence resource="EMBL-CDS" id="EAL33036"/>
    </conflict>
</comment>
<proteinExistence type="evidence at transcript level"/>
<name>DECA_DROPS</name>
<protein>
    <recommendedName>
        <fullName>Protein decapentaplegic</fullName>
        <shortName>Protein DPP-C</shortName>
    </recommendedName>
</protein>
<feature type="signal peptide" evidence="2">
    <location>
        <begin position="1"/>
        <end position="23"/>
    </location>
</feature>
<feature type="propeptide" id="PRO_0000033666" evidence="1">
    <location>
        <begin position="24"/>
        <end position="474"/>
    </location>
</feature>
<feature type="chain" id="PRO_0000033667" description="Protein decapentaplegic">
    <location>
        <begin position="475"/>
        <end position="616"/>
    </location>
</feature>
<feature type="region of interest" description="Disordered" evidence="3">
    <location>
        <begin position="80"/>
        <end position="188"/>
    </location>
</feature>
<feature type="region of interest" description="Disordered" evidence="3">
    <location>
        <begin position="470"/>
        <end position="512"/>
    </location>
</feature>
<feature type="compositionally biased region" description="Low complexity" evidence="3">
    <location>
        <begin position="86"/>
        <end position="105"/>
    </location>
</feature>
<feature type="compositionally biased region" description="Basic residues" evidence="3">
    <location>
        <begin position="106"/>
        <end position="115"/>
    </location>
</feature>
<feature type="compositionally biased region" description="Basic and acidic residues" evidence="3">
    <location>
        <begin position="116"/>
        <end position="139"/>
    </location>
</feature>
<feature type="compositionally biased region" description="Polar residues" evidence="3">
    <location>
        <begin position="173"/>
        <end position="188"/>
    </location>
</feature>
<feature type="compositionally biased region" description="Gly residues" evidence="3">
    <location>
        <begin position="477"/>
        <end position="496"/>
    </location>
</feature>
<feature type="compositionally biased region" description="Basic residues" evidence="3">
    <location>
        <begin position="497"/>
        <end position="509"/>
    </location>
</feature>
<feature type="glycosylation site" description="N-linked (GlcNAc...) asparagine" evidence="2">
    <location>
        <position position="147"/>
    </location>
</feature>
<feature type="glycosylation site" description="N-linked (GlcNAc...) asparagine" evidence="2">
    <location>
        <position position="360"/>
    </location>
</feature>
<feature type="glycosylation site" description="N-linked (GlcNAc...) asparagine" evidence="2">
    <location>
        <position position="395"/>
    </location>
</feature>
<feature type="glycosylation site" description="N-linked (GlcNAc...) asparagine" evidence="2">
    <location>
        <position position="557"/>
    </location>
</feature>
<feature type="disulfide bond" evidence="1">
    <location>
        <begin position="515"/>
        <end position="581"/>
    </location>
</feature>
<feature type="disulfide bond" evidence="1">
    <location>
        <begin position="544"/>
        <end position="613"/>
    </location>
</feature>
<feature type="disulfide bond" evidence="1">
    <location>
        <begin position="548"/>
        <end position="615"/>
    </location>
</feature>
<feature type="disulfide bond" description="Interchain" evidence="1">
    <location>
        <position position="580"/>
    </location>
</feature>
<feature type="sequence conflict" description="In Ref. 3; AAX13039." evidence="4" ref="3">
    <original>A</original>
    <variation>AAAA</variation>
    <location>
        <position position="45"/>
    </location>
</feature>
<feature type="sequence conflict" description="In Ref. 1; AAC47553 and 3; AAX13039." evidence="4" ref="1 3">
    <original>T</original>
    <variation>TAT</variation>
    <location>
        <position position="54"/>
    </location>
</feature>
<feature type="sequence conflict" description="In Ref. 3; AAX13039." evidence="4" ref="3">
    <location>
        <begin position="95"/>
        <end position="96"/>
    </location>
</feature>
<feature type="sequence conflict" description="In Ref. 1; AAC47553." evidence="4" ref="1">
    <original>Q</original>
    <variation>QQQQ</variation>
    <location>
        <position position="163"/>
    </location>
</feature>
<feature type="sequence conflict" description="In Ref. 1; AAC47553." evidence="4" ref="1">
    <original>T</original>
    <variation>A</variation>
    <location>
        <position position="179"/>
    </location>
</feature>
<keyword id="KW-0217">Developmental protein</keyword>
<keyword id="KW-0221">Differentiation</keyword>
<keyword id="KW-1015">Disulfide bond</keyword>
<keyword id="KW-0325">Glycoprotein</keyword>
<keyword id="KW-0339">Growth factor</keyword>
<keyword id="KW-1185">Reference proteome</keyword>
<keyword id="KW-0964">Secreted</keyword>
<keyword id="KW-0732">Signal</keyword>
<evidence type="ECO:0000250" key="1"/>
<evidence type="ECO:0000255" key="2"/>
<evidence type="ECO:0000256" key="3">
    <source>
        <dbReference type="SAM" id="MobiDB-lite"/>
    </source>
</evidence>
<evidence type="ECO:0000305" key="4"/>
<accession>P91699</accession>
<accession>Q29KY8</accession>
<accession>Q56RP3</accession>